<sequence>MKIRASVRKICEKCRLIRRRGRVMVICSNPRHKQRQG</sequence>
<evidence type="ECO:0000255" key="1">
    <source>
        <dbReference type="HAMAP-Rule" id="MF_00251"/>
    </source>
</evidence>
<evidence type="ECO:0000305" key="2"/>
<comment type="subcellular location">
    <subcellularLocation>
        <location>Plastid</location>
        <location>Chloroplast</location>
    </subcellularLocation>
</comment>
<comment type="similarity">
    <text evidence="1">Belongs to the bacterial ribosomal protein bL36 family.</text>
</comment>
<keyword id="KW-0150">Chloroplast</keyword>
<keyword id="KW-0934">Plastid</keyword>
<keyword id="KW-0687">Ribonucleoprotein</keyword>
<keyword id="KW-0689">Ribosomal protein</keyword>
<accession>A6H5L5</accession>
<gene>
    <name evidence="1" type="primary">rpl36</name>
</gene>
<organism>
    <name type="scientific">Cycas taitungensis</name>
    <name type="common">Prince sago</name>
    <name type="synonym">Cycas taiwaniana</name>
    <dbReference type="NCBI Taxonomy" id="54799"/>
    <lineage>
        <taxon>Eukaryota</taxon>
        <taxon>Viridiplantae</taxon>
        <taxon>Streptophyta</taxon>
        <taxon>Embryophyta</taxon>
        <taxon>Tracheophyta</taxon>
        <taxon>Spermatophyta</taxon>
        <taxon>Cycadidae</taxon>
        <taxon>Cycadales</taxon>
        <taxon>Cycadaceae</taxon>
        <taxon>Cycas</taxon>
    </lineage>
</organism>
<reference key="1">
    <citation type="journal article" date="2007" name="Mol. Biol. Evol.">
        <title>Chloroplast genome (cpDNA) of Cycas taitungensis and 56 cp protein-coding genes of Gnetum parvifolium: insights into cpDNA evolution and phylogeny of extant seed plants.</title>
        <authorList>
            <person name="Wu C.-S."/>
            <person name="Wang Y.-N."/>
            <person name="Liu S.-M."/>
            <person name="Chaw S.-M."/>
        </authorList>
    </citation>
    <scope>NUCLEOTIDE SEQUENCE [LARGE SCALE GENOMIC DNA]</scope>
</reference>
<feature type="chain" id="PRO_0000344757" description="Large ribosomal subunit protein bL36c">
    <location>
        <begin position="1"/>
        <end position="37"/>
    </location>
</feature>
<geneLocation type="chloroplast"/>
<dbReference type="EMBL" id="AP009339">
    <property type="protein sequence ID" value="BAF64981.1"/>
    <property type="molecule type" value="Genomic_DNA"/>
</dbReference>
<dbReference type="RefSeq" id="YP_001312240.1">
    <property type="nucleotide sequence ID" value="NC_009618.1"/>
</dbReference>
<dbReference type="SMR" id="A6H5L5"/>
<dbReference type="GeneID" id="5309549"/>
<dbReference type="GO" id="GO:0009507">
    <property type="term" value="C:chloroplast"/>
    <property type="evidence" value="ECO:0007669"/>
    <property type="project" value="UniProtKB-SubCell"/>
</dbReference>
<dbReference type="GO" id="GO:1990904">
    <property type="term" value="C:ribonucleoprotein complex"/>
    <property type="evidence" value="ECO:0007669"/>
    <property type="project" value="UniProtKB-KW"/>
</dbReference>
<dbReference type="GO" id="GO:0005840">
    <property type="term" value="C:ribosome"/>
    <property type="evidence" value="ECO:0007669"/>
    <property type="project" value="UniProtKB-KW"/>
</dbReference>
<dbReference type="GO" id="GO:0003735">
    <property type="term" value="F:structural constituent of ribosome"/>
    <property type="evidence" value="ECO:0007669"/>
    <property type="project" value="InterPro"/>
</dbReference>
<dbReference type="GO" id="GO:0006412">
    <property type="term" value="P:translation"/>
    <property type="evidence" value="ECO:0007669"/>
    <property type="project" value="UniProtKB-UniRule"/>
</dbReference>
<dbReference type="HAMAP" id="MF_00251">
    <property type="entry name" value="Ribosomal_bL36"/>
    <property type="match status" value="1"/>
</dbReference>
<dbReference type="InterPro" id="IPR000473">
    <property type="entry name" value="Ribosomal_bL36"/>
</dbReference>
<dbReference type="InterPro" id="IPR035977">
    <property type="entry name" value="Ribosomal_bL36_sp"/>
</dbReference>
<dbReference type="NCBIfam" id="TIGR01022">
    <property type="entry name" value="rpmJ_bact"/>
    <property type="match status" value="1"/>
</dbReference>
<dbReference type="PANTHER" id="PTHR42888">
    <property type="entry name" value="50S RIBOSOMAL PROTEIN L36, CHLOROPLASTIC"/>
    <property type="match status" value="1"/>
</dbReference>
<dbReference type="PANTHER" id="PTHR42888:SF1">
    <property type="entry name" value="LARGE RIBOSOMAL SUBUNIT PROTEIN BL36C"/>
    <property type="match status" value="1"/>
</dbReference>
<dbReference type="Pfam" id="PF00444">
    <property type="entry name" value="Ribosomal_L36"/>
    <property type="match status" value="1"/>
</dbReference>
<dbReference type="SUPFAM" id="SSF57840">
    <property type="entry name" value="Ribosomal protein L36"/>
    <property type="match status" value="1"/>
</dbReference>
<dbReference type="PROSITE" id="PS00828">
    <property type="entry name" value="RIBOSOMAL_L36"/>
    <property type="match status" value="1"/>
</dbReference>
<protein>
    <recommendedName>
        <fullName evidence="1">Large ribosomal subunit protein bL36c</fullName>
    </recommendedName>
    <alternativeName>
        <fullName evidence="2">50S ribosomal protein L36, chloroplastic</fullName>
    </alternativeName>
</protein>
<name>RK36_CYCTA</name>
<proteinExistence type="inferred from homology"/>